<gene>
    <name type="primary">GAP43</name>
</gene>
<evidence type="ECO:0000250" key="1"/>
<evidence type="ECO:0000250" key="2">
    <source>
        <dbReference type="UniProtKB" id="P06837"/>
    </source>
</evidence>
<evidence type="ECO:0000250" key="3">
    <source>
        <dbReference type="UniProtKB" id="P17677"/>
    </source>
</evidence>
<evidence type="ECO:0000255" key="4">
    <source>
        <dbReference type="PROSITE-ProRule" id="PRU00116"/>
    </source>
</evidence>
<evidence type="ECO:0000256" key="5">
    <source>
        <dbReference type="SAM" id="MobiDB-lite"/>
    </source>
</evidence>
<evidence type="ECO:0000305" key="6"/>
<organism>
    <name type="scientific">Serinus canaria</name>
    <name type="common">Island canary</name>
    <name type="synonym">Fringilla canaria</name>
    <dbReference type="NCBI Taxonomy" id="9135"/>
    <lineage>
        <taxon>Eukaryota</taxon>
        <taxon>Metazoa</taxon>
        <taxon>Chordata</taxon>
        <taxon>Craniata</taxon>
        <taxon>Vertebrata</taxon>
        <taxon>Euteleostomi</taxon>
        <taxon>Archelosauria</taxon>
        <taxon>Archosauria</taxon>
        <taxon>Dinosauria</taxon>
        <taxon>Saurischia</taxon>
        <taxon>Theropoda</taxon>
        <taxon>Coelurosauria</taxon>
        <taxon>Aves</taxon>
        <taxon>Neognathae</taxon>
        <taxon>Neoaves</taxon>
        <taxon>Telluraves</taxon>
        <taxon>Australaves</taxon>
        <taxon>Passeriformes</taxon>
        <taxon>Passeroidea</taxon>
        <taxon>Fringillidae</taxon>
        <taxon>Carduelinae</taxon>
        <taxon>Serinus</taxon>
    </lineage>
</organism>
<dbReference type="EMBL" id="U75453">
    <property type="protein sequence ID" value="AAB18340.1"/>
    <property type="molecule type" value="mRNA"/>
</dbReference>
<dbReference type="SMR" id="Q98987"/>
<dbReference type="Proteomes" id="UP000694409">
    <property type="component" value="Unplaced"/>
</dbReference>
<dbReference type="GO" id="GO:0005737">
    <property type="term" value="C:cytoplasm"/>
    <property type="evidence" value="ECO:0007669"/>
    <property type="project" value="TreeGrafter"/>
</dbReference>
<dbReference type="GO" id="GO:0031527">
    <property type="term" value="C:filopodium membrane"/>
    <property type="evidence" value="ECO:0007669"/>
    <property type="project" value="UniProtKB-SubCell"/>
</dbReference>
<dbReference type="GO" id="GO:0032584">
    <property type="term" value="C:growth cone membrane"/>
    <property type="evidence" value="ECO:0007669"/>
    <property type="project" value="UniProtKB-SubCell"/>
</dbReference>
<dbReference type="GO" id="GO:0014069">
    <property type="term" value="C:postsynaptic density"/>
    <property type="evidence" value="ECO:0007669"/>
    <property type="project" value="TreeGrafter"/>
</dbReference>
<dbReference type="GO" id="GO:0005516">
    <property type="term" value="F:calmodulin binding"/>
    <property type="evidence" value="ECO:0007669"/>
    <property type="project" value="UniProtKB-KW"/>
</dbReference>
<dbReference type="GO" id="GO:0035727">
    <property type="term" value="F:lysophosphatidic acid binding"/>
    <property type="evidence" value="ECO:0007669"/>
    <property type="project" value="TreeGrafter"/>
</dbReference>
<dbReference type="GO" id="GO:1901981">
    <property type="term" value="F:phosphatidylinositol phosphate binding"/>
    <property type="evidence" value="ECO:0007669"/>
    <property type="project" value="TreeGrafter"/>
</dbReference>
<dbReference type="GO" id="GO:0001786">
    <property type="term" value="F:phosphatidylserine binding"/>
    <property type="evidence" value="ECO:0007669"/>
    <property type="project" value="TreeGrafter"/>
</dbReference>
<dbReference type="GO" id="GO:0016198">
    <property type="term" value="P:axon choice point recognition"/>
    <property type="evidence" value="ECO:0007669"/>
    <property type="project" value="TreeGrafter"/>
</dbReference>
<dbReference type="GO" id="GO:0031103">
    <property type="term" value="P:axon regeneration"/>
    <property type="evidence" value="ECO:0007669"/>
    <property type="project" value="TreeGrafter"/>
</dbReference>
<dbReference type="GO" id="GO:0040008">
    <property type="term" value="P:regulation of growth"/>
    <property type="evidence" value="ECO:0007669"/>
    <property type="project" value="InterPro"/>
</dbReference>
<dbReference type="GO" id="GO:0042246">
    <property type="term" value="P:tissue regeneration"/>
    <property type="evidence" value="ECO:0007669"/>
    <property type="project" value="TreeGrafter"/>
</dbReference>
<dbReference type="FunFam" id="1.20.5.190:FF:000063">
    <property type="entry name" value="Growth associated protein 43"/>
    <property type="match status" value="1"/>
</dbReference>
<dbReference type="Gene3D" id="1.20.5.190">
    <property type="match status" value="1"/>
</dbReference>
<dbReference type="InterPro" id="IPR000048">
    <property type="entry name" value="IQ_motif_EF-hand-BS"/>
</dbReference>
<dbReference type="InterPro" id="IPR001422">
    <property type="entry name" value="Neuromodulin"/>
</dbReference>
<dbReference type="InterPro" id="IPR017454">
    <property type="entry name" value="Neuromodulin_C"/>
</dbReference>
<dbReference type="InterPro" id="IPR018947">
    <property type="entry name" value="Neuromodulin_gap-junction_N"/>
</dbReference>
<dbReference type="InterPro" id="IPR033137">
    <property type="entry name" value="Neuromodulin_P_site"/>
</dbReference>
<dbReference type="PANTHER" id="PTHR10699">
    <property type="entry name" value="NEUROMODULIN"/>
    <property type="match status" value="1"/>
</dbReference>
<dbReference type="PANTHER" id="PTHR10699:SF15">
    <property type="entry name" value="NEUROMODULIN"/>
    <property type="match status" value="1"/>
</dbReference>
<dbReference type="Pfam" id="PF00612">
    <property type="entry name" value="IQ"/>
    <property type="match status" value="1"/>
</dbReference>
<dbReference type="Pfam" id="PF06614">
    <property type="entry name" value="Neuromodulin"/>
    <property type="match status" value="1"/>
</dbReference>
<dbReference type="Pfam" id="PF10580">
    <property type="entry name" value="Neuromodulin_N"/>
    <property type="match status" value="1"/>
</dbReference>
<dbReference type="PRINTS" id="PR00215">
    <property type="entry name" value="NEUROMODULIN"/>
</dbReference>
<dbReference type="SMART" id="SM00015">
    <property type="entry name" value="IQ"/>
    <property type="match status" value="1"/>
</dbReference>
<dbReference type="PROSITE" id="PS50096">
    <property type="entry name" value="IQ"/>
    <property type="match status" value="1"/>
</dbReference>
<dbReference type="PROSITE" id="PS00413">
    <property type="entry name" value="NEUROMODULIN_2"/>
    <property type="match status" value="1"/>
</dbReference>
<feature type="chain" id="PRO_0000159601" description="Neuromodulin">
    <location>
        <begin position="1" status="less than"/>
        <end position="241"/>
    </location>
</feature>
<feature type="domain" description="IQ" evidence="4">
    <location>
        <begin position="25"/>
        <end position="54"/>
    </location>
</feature>
<feature type="region of interest" description="Disordered" evidence="5">
    <location>
        <begin position="1"/>
        <end position="241"/>
    </location>
</feature>
<feature type="compositionally biased region" description="Basic and acidic residues" evidence="5">
    <location>
        <begin position="1"/>
        <end position="26"/>
    </location>
</feature>
<feature type="compositionally biased region" description="Low complexity" evidence="5">
    <location>
        <begin position="80"/>
        <end position="95"/>
    </location>
</feature>
<feature type="compositionally biased region" description="Low complexity" evidence="5">
    <location>
        <begin position="118"/>
        <end position="131"/>
    </location>
</feature>
<feature type="compositionally biased region" description="Basic and acidic residues" evidence="5">
    <location>
        <begin position="132"/>
        <end position="147"/>
    </location>
</feature>
<feature type="compositionally biased region" description="Basic and acidic residues" evidence="5">
    <location>
        <begin position="159"/>
        <end position="171"/>
    </location>
</feature>
<feature type="compositionally biased region" description="Low complexity" evidence="5">
    <location>
        <begin position="172"/>
        <end position="198"/>
    </location>
</feature>
<feature type="compositionally biased region" description="Basic and acidic residues" evidence="5">
    <location>
        <begin position="208"/>
        <end position="220"/>
    </location>
</feature>
<feature type="compositionally biased region" description="Basic and acidic residues" evidence="5">
    <location>
        <begin position="232"/>
        <end position="241"/>
    </location>
</feature>
<feature type="non-terminal residue">
    <location>
        <position position="1"/>
    </location>
</feature>
<accession>Q98987</accession>
<proteinExistence type="evidence at transcript level"/>
<protein>
    <recommendedName>
        <fullName>Neuromodulin</fullName>
    </recommendedName>
    <alternativeName>
        <fullName>Axonal membrane protein GAP-43</fullName>
    </alternativeName>
    <alternativeName>
        <fullName>Growth-associated protein 43</fullName>
    </alternativeName>
</protein>
<sequence length="241" mass="25019">TKQVEKNEDGDQKIEQDGIKPEDKAHKAATKIQASFRGHITRKKLKGEKKGDAPASETDAADKKEEGPAGGAAENKESEAPAATEAAAADSAQQEEGSKDSSAPAEEKKGDGAADTGSEQPAPQAATPAASSEEKTAAAAAPERESTPKASTDNSPSLKADEAQDKEEPKQADVPAADTTATTTPAAEDATAKATAQPQMETVESSQTEEKTDAVEETKPTESAQQEEMKEEESKADQENA</sequence>
<name>NEUM_SERCA</name>
<comment type="function">
    <text evidence="3">This protein is associated with nerve growth. It is a major component of the motile 'growth cones' that form the tips of elongating axons. Plays a role in axonal and dendritic filopodia induction (By similarity).</text>
</comment>
<comment type="subunit">
    <text evidence="1">Binds calmodulin with a greater affinity in the absence of Ca(2+) than in its presence.</text>
</comment>
<comment type="subcellular location">
    <subcellularLocation>
        <location evidence="3">Cell membrane</location>
        <topology evidence="3">Peripheral membrane protein</topology>
        <orientation evidence="3">Cytoplasmic side</orientation>
    </subcellularLocation>
    <subcellularLocation>
        <location evidence="3">Cell projection</location>
        <location evidence="3">Growth cone membrane</location>
        <topology evidence="3">Peripheral membrane protein</topology>
        <orientation evidence="3">Cytoplasmic side</orientation>
    </subcellularLocation>
    <subcellularLocation>
        <location evidence="3">Synapse</location>
    </subcellularLocation>
    <subcellularLocation>
        <location evidence="3">Cell projection</location>
        <location evidence="3">Filopodium membrane</location>
        <topology evidence="3">Peripheral membrane protein</topology>
    </subcellularLocation>
</comment>
<comment type="PTM">
    <text evidence="2 3">Palmitoylated (By similarity). Palmitoylation is essential for plasma membrane association (By similarity).</text>
</comment>
<comment type="similarity">
    <text evidence="6">Belongs to the neuromodulin family.</text>
</comment>
<keyword id="KW-0112">Calmodulin-binding</keyword>
<keyword id="KW-1003">Cell membrane</keyword>
<keyword id="KW-0966">Cell projection</keyword>
<keyword id="KW-0217">Developmental protein</keyword>
<keyword id="KW-0221">Differentiation</keyword>
<keyword id="KW-0341">Growth regulation</keyword>
<keyword id="KW-0449">Lipoprotein</keyword>
<keyword id="KW-0472">Membrane</keyword>
<keyword id="KW-0524">Neurogenesis</keyword>
<keyword id="KW-0597">Phosphoprotein</keyword>
<keyword id="KW-1185">Reference proteome</keyword>
<keyword id="KW-0770">Synapse</keyword>
<reference key="1">
    <citation type="submission" date="1996-11" db="EMBL/GenBank/DDBJ databases">
        <title>Developmental regulation of GAP43 mRNA in the avian song control circuit.</title>
        <authorList>
            <person name="Clayton D.F."/>
            <person name="Jin H."/>
            <person name="Siepka S.M."/>
            <person name="Mello C.V."/>
            <person name="George J.M."/>
        </authorList>
    </citation>
    <scope>NUCLEOTIDE SEQUENCE [MRNA]</scope>
    <source>
        <strain>Wasserschlager</strain>
    </source>
</reference>